<dbReference type="EMBL" id="AP006716">
    <property type="protein sequence ID" value="BAE04119.1"/>
    <property type="molecule type" value="Genomic_DNA"/>
</dbReference>
<dbReference type="RefSeq" id="WP_011275130.1">
    <property type="nucleotide sequence ID" value="NC_007168.1"/>
</dbReference>
<dbReference type="SMR" id="Q4L8A6"/>
<dbReference type="GeneID" id="93780199"/>
<dbReference type="KEGG" id="sha:SH0810"/>
<dbReference type="eggNOG" id="COG0255">
    <property type="taxonomic scope" value="Bacteria"/>
</dbReference>
<dbReference type="HOGENOM" id="CLU_158491_5_2_9"/>
<dbReference type="OrthoDB" id="9815192at2"/>
<dbReference type="Proteomes" id="UP000000543">
    <property type="component" value="Chromosome"/>
</dbReference>
<dbReference type="GO" id="GO:0022625">
    <property type="term" value="C:cytosolic large ribosomal subunit"/>
    <property type="evidence" value="ECO:0007669"/>
    <property type="project" value="TreeGrafter"/>
</dbReference>
<dbReference type="GO" id="GO:0003735">
    <property type="term" value="F:structural constituent of ribosome"/>
    <property type="evidence" value="ECO:0007669"/>
    <property type="project" value="InterPro"/>
</dbReference>
<dbReference type="GO" id="GO:0006412">
    <property type="term" value="P:translation"/>
    <property type="evidence" value="ECO:0007669"/>
    <property type="project" value="UniProtKB-UniRule"/>
</dbReference>
<dbReference type="CDD" id="cd00427">
    <property type="entry name" value="Ribosomal_L29_HIP"/>
    <property type="match status" value="1"/>
</dbReference>
<dbReference type="FunFam" id="1.10.287.310:FF:000001">
    <property type="entry name" value="50S ribosomal protein L29"/>
    <property type="match status" value="1"/>
</dbReference>
<dbReference type="Gene3D" id="1.10.287.310">
    <property type="match status" value="1"/>
</dbReference>
<dbReference type="HAMAP" id="MF_00374">
    <property type="entry name" value="Ribosomal_uL29"/>
    <property type="match status" value="1"/>
</dbReference>
<dbReference type="InterPro" id="IPR050063">
    <property type="entry name" value="Ribosomal_protein_uL29"/>
</dbReference>
<dbReference type="InterPro" id="IPR001854">
    <property type="entry name" value="Ribosomal_uL29"/>
</dbReference>
<dbReference type="InterPro" id="IPR036049">
    <property type="entry name" value="Ribosomal_uL29_sf"/>
</dbReference>
<dbReference type="NCBIfam" id="TIGR00012">
    <property type="entry name" value="L29"/>
    <property type="match status" value="1"/>
</dbReference>
<dbReference type="PANTHER" id="PTHR10916">
    <property type="entry name" value="60S RIBOSOMAL PROTEIN L35/50S RIBOSOMAL PROTEIN L29"/>
    <property type="match status" value="1"/>
</dbReference>
<dbReference type="PANTHER" id="PTHR10916:SF0">
    <property type="entry name" value="LARGE RIBOSOMAL SUBUNIT PROTEIN UL29C"/>
    <property type="match status" value="1"/>
</dbReference>
<dbReference type="Pfam" id="PF00831">
    <property type="entry name" value="Ribosomal_L29"/>
    <property type="match status" value="1"/>
</dbReference>
<dbReference type="SUPFAM" id="SSF46561">
    <property type="entry name" value="Ribosomal protein L29 (L29p)"/>
    <property type="match status" value="1"/>
</dbReference>
<sequence>MKAKEIRDLTTSEIEEQIKSSKEELFNLRFQLATGQLEETARIRTVRKTIARLKTVAREREIEESKANQ</sequence>
<feature type="chain" id="PRO_1000007619" description="Large ribosomal subunit protein uL29">
    <location>
        <begin position="1"/>
        <end position="69"/>
    </location>
</feature>
<organism>
    <name type="scientific">Staphylococcus haemolyticus (strain JCSC1435)</name>
    <dbReference type="NCBI Taxonomy" id="279808"/>
    <lineage>
        <taxon>Bacteria</taxon>
        <taxon>Bacillati</taxon>
        <taxon>Bacillota</taxon>
        <taxon>Bacilli</taxon>
        <taxon>Bacillales</taxon>
        <taxon>Staphylococcaceae</taxon>
        <taxon>Staphylococcus</taxon>
    </lineage>
</organism>
<comment type="similarity">
    <text evidence="1">Belongs to the universal ribosomal protein uL29 family.</text>
</comment>
<gene>
    <name evidence="1" type="primary">rpmC</name>
    <name type="ordered locus">SH0810</name>
</gene>
<proteinExistence type="inferred from homology"/>
<reference key="1">
    <citation type="journal article" date="2005" name="J. Bacteriol.">
        <title>Whole-genome sequencing of Staphylococcus haemolyticus uncovers the extreme plasticity of its genome and the evolution of human-colonizing staphylococcal species.</title>
        <authorList>
            <person name="Takeuchi F."/>
            <person name="Watanabe S."/>
            <person name="Baba T."/>
            <person name="Yuzawa H."/>
            <person name="Ito T."/>
            <person name="Morimoto Y."/>
            <person name="Kuroda M."/>
            <person name="Cui L."/>
            <person name="Takahashi M."/>
            <person name="Ankai A."/>
            <person name="Baba S."/>
            <person name="Fukui S."/>
            <person name="Lee J.C."/>
            <person name="Hiramatsu K."/>
        </authorList>
    </citation>
    <scope>NUCLEOTIDE SEQUENCE [LARGE SCALE GENOMIC DNA]</scope>
    <source>
        <strain>JCSC1435</strain>
    </source>
</reference>
<accession>Q4L8A6</accession>
<evidence type="ECO:0000255" key="1">
    <source>
        <dbReference type="HAMAP-Rule" id="MF_00374"/>
    </source>
</evidence>
<evidence type="ECO:0000305" key="2"/>
<keyword id="KW-0687">Ribonucleoprotein</keyword>
<keyword id="KW-0689">Ribosomal protein</keyword>
<protein>
    <recommendedName>
        <fullName evidence="1">Large ribosomal subunit protein uL29</fullName>
    </recommendedName>
    <alternativeName>
        <fullName evidence="2">50S ribosomal protein L29</fullName>
    </alternativeName>
</protein>
<name>RL29_STAHJ</name>